<sequence length="103" mass="11431">MRQRLLPSVTSLLLVALLFPGSSQARHVNHSATEALGELRERAPGQGTNGFQLLRHAVKRDLLPPRTPPYQVHISHREARGPSFRICVDFLGPRWARGCSTGN</sequence>
<organism>
    <name type="scientific">Homo sapiens</name>
    <name type="common">Human</name>
    <dbReference type="NCBI Taxonomy" id="9606"/>
    <lineage>
        <taxon>Eukaryota</taxon>
        <taxon>Metazoa</taxon>
        <taxon>Chordata</taxon>
        <taxon>Craniata</taxon>
        <taxon>Vertebrata</taxon>
        <taxon>Euteleostomi</taxon>
        <taxon>Mammalia</taxon>
        <taxon>Eutheria</taxon>
        <taxon>Euarchontoglires</taxon>
        <taxon>Primates</taxon>
        <taxon>Haplorrhini</taxon>
        <taxon>Catarrhini</taxon>
        <taxon>Hominidae</taxon>
        <taxon>Homo</taxon>
    </lineage>
</organism>
<reference key="1">
    <citation type="journal article" date="1994" name="Biol. Reprod.">
        <title>Molecular cloning and characterization of a novel human sperm antigen (HE2) specifically expressed in the proximal epididymis.</title>
        <authorList>
            <person name="Osterhoff C."/>
            <person name="Kirchhoff C."/>
            <person name="Krull N."/>
            <person name="Ivell R."/>
        </authorList>
    </citation>
    <scope>NUCLEOTIDE SEQUENCE [MRNA] (ISOFORM EP2A)</scope>
    <scope>TISSUE SPECIFICITY</scope>
</reference>
<reference key="2">
    <citation type="journal article" date="2000" name="Endocrinology">
        <title>HE2 beta and HE2 gamma, new members of an epididymis-specific family of androgen-regulated proteins in the human.</title>
        <authorList>
            <person name="Hamil K.G."/>
            <person name="Sivashanmugam P."/>
            <person name="Richardson R.T."/>
            <person name="Grossman G."/>
            <person name="Ruben S.M."/>
            <person name="Mohler J.L."/>
            <person name="Petrusz P."/>
            <person name="O'Rand M.G."/>
            <person name="French F.S."/>
            <person name="Hall S.H."/>
        </authorList>
    </citation>
    <scope>NUCLEOTIDE SEQUENCE [MRNA] (ISOFORMS EP2A AND EP2D)</scope>
</reference>
<reference key="3">
    <citation type="journal article" date="2001" name="Biol. Reprod.">
        <title>Organization of the human gene encoding the epididymis-specific EP2 protein variants and its relationship to defensin genes.</title>
        <authorList>
            <person name="Frohlich O."/>
            <person name="Po C."/>
            <person name="Young L.G."/>
        </authorList>
    </citation>
    <scope>NUCLEOTIDE SEQUENCE [GENOMIC DNA] (ISOFORMS EP2A; EP2B; EP2C; EP2D AND EP2E)</scope>
    <scope>VARIANT GLN-77</scope>
</reference>
<reference key="4">
    <citation type="submission" date="2004-02" db="EMBL/GenBank/DDBJ databases">
        <title>SPAG11/Isoform HE2C, an atypical anionic beta-defensin-like peptide of the proximal human epididymis.</title>
        <authorList>
            <person name="von Horsten H.H."/>
            <person name="Derr P."/>
            <person name="Schaefer B."/>
            <person name="Kirchhoff C."/>
        </authorList>
    </citation>
    <scope>NUCLEOTIDE SEQUENCE [MRNA] (ISOFORM EP2C)</scope>
</reference>
<reference key="5">
    <citation type="journal article" date="2006" name="Nature">
        <title>DNA sequence and analysis of human chromosome 8.</title>
        <authorList>
            <person name="Nusbaum C."/>
            <person name="Mikkelsen T.S."/>
            <person name="Zody M.C."/>
            <person name="Asakawa S."/>
            <person name="Taudien S."/>
            <person name="Garber M."/>
            <person name="Kodira C.D."/>
            <person name="Schueler M.G."/>
            <person name="Shimizu A."/>
            <person name="Whittaker C.A."/>
            <person name="Chang J.L."/>
            <person name="Cuomo C.A."/>
            <person name="Dewar K."/>
            <person name="FitzGerald M.G."/>
            <person name="Yang X."/>
            <person name="Allen N.R."/>
            <person name="Anderson S."/>
            <person name="Asakawa T."/>
            <person name="Blechschmidt K."/>
            <person name="Bloom T."/>
            <person name="Borowsky M.L."/>
            <person name="Butler J."/>
            <person name="Cook A."/>
            <person name="Corum B."/>
            <person name="DeArellano K."/>
            <person name="DeCaprio D."/>
            <person name="Dooley K.T."/>
            <person name="Dorris L. III"/>
            <person name="Engels R."/>
            <person name="Gloeckner G."/>
            <person name="Hafez N."/>
            <person name="Hagopian D.S."/>
            <person name="Hall J.L."/>
            <person name="Ishikawa S.K."/>
            <person name="Jaffe D.B."/>
            <person name="Kamat A."/>
            <person name="Kudoh J."/>
            <person name="Lehmann R."/>
            <person name="Lokitsang T."/>
            <person name="Macdonald P."/>
            <person name="Major J.E."/>
            <person name="Matthews C.D."/>
            <person name="Mauceli E."/>
            <person name="Menzel U."/>
            <person name="Mihalev A.H."/>
            <person name="Minoshima S."/>
            <person name="Murayama Y."/>
            <person name="Naylor J.W."/>
            <person name="Nicol R."/>
            <person name="Nguyen C."/>
            <person name="O'Leary S.B."/>
            <person name="O'Neill K."/>
            <person name="Parker S.C.J."/>
            <person name="Polley A."/>
            <person name="Raymond C.K."/>
            <person name="Reichwald K."/>
            <person name="Rodriguez J."/>
            <person name="Sasaki T."/>
            <person name="Schilhabel M."/>
            <person name="Siddiqui R."/>
            <person name="Smith C.L."/>
            <person name="Sneddon T.P."/>
            <person name="Talamas J.A."/>
            <person name="Tenzin P."/>
            <person name="Topham K."/>
            <person name="Venkataraman V."/>
            <person name="Wen G."/>
            <person name="Yamazaki S."/>
            <person name="Young S.K."/>
            <person name="Zeng Q."/>
            <person name="Zimmer A.R."/>
            <person name="Rosenthal A."/>
            <person name="Birren B.W."/>
            <person name="Platzer M."/>
            <person name="Shimizu N."/>
            <person name="Lander E.S."/>
        </authorList>
    </citation>
    <scope>NUCLEOTIDE SEQUENCE [LARGE SCALE GENOMIC DNA]</scope>
</reference>
<evidence type="ECO:0000250" key="1">
    <source>
        <dbReference type="UniProtKB" id="Q8VBV2"/>
    </source>
</evidence>
<evidence type="ECO:0000255" key="2"/>
<evidence type="ECO:0000269" key="3">
    <source>
    </source>
</evidence>
<evidence type="ECO:0000269" key="4">
    <source>
    </source>
</evidence>
<evidence type="ECO:0000303" key="5">
    <source>
    </source>
</evidence>
<evidence type="ECO:0000303" key="6">
    <source>
    </source>
</evidence>
<evidence type="ECO:0000303" key="7">
    <source>
    </source>
</evidence>
<evidence type="ECO:0000303" key="8">
    <source ref="4"/>
</evidence>
<evidence type="ECO:0000305" key="9"/>
<evidence type="ECO:0000312" key="10">
    <source>
        <dbReference type="HGNC" id="HGNC:14534"/>
    </source>
</evidence>
<name>SG11B_HUMAN</name>
<proteinExistence type="evidence at protein level"/>
<keyword id="KW-0025">Alternative splicing</keyword>
<keyword id="KW-0044">Antibiotic</keyword>
<keyword id="KW-0929">Antimicrobial</keyword>
<keyword id="KW-0211">Defensin</keyword>
<keyword id="KW-0325">Glycoprotein</keyword>
<keyword id="KW-1267">Proteomics identification</keyword>
<keyword id="KW-1185">Reference proteome</keyword>
<keyword id="KW-0964">Secreted</keyword>
<keyword id="KW-0732">Signal</keyword>
<protein>
    <recommendedName>
        <fullName evidence="10">Sperm-associated antigen 11B</fullName>
    </recommendedName>
    <alternativeName>
        <fullName evidence="5">Human epididymis-specific protein 2</fullName>
        <shortName evidence="5">He2</shortName>
    </alternativeName>
    <alternativeName>
        <fullName evidence="6">Protein EP2</fullName>
    </alternativeName>
    <alternativeName>
        <fullName evidence="7">Sperm antigen HE2</fullName>
    </alternativeName>
</protein>
<gene>
    <name evidence="10" type="primary">SPAG11B</name>
    <name evidence="6" type="synonym">EP2</name>
    <name evidence="7" type="synonym">HE2</name>
</gene>
<comment type="function">
    <text evidence="1">Has antimicrobial activity against E.coli (By similarity). Plays a role in the defense response in the male reproductive tract, contributing to sperm maturation, storage and protection (By similarity).</text>
</comment>
<comment type="interaction">
    <interactant intactId="EBI-14835966">
        <id>Q08648-4</id>
    </interactant>
    <interactant intactId="EBI-9090990">
        <id>Q5W5X9-3</id>
        <label>TTC23</label>
    </interactant>
    <organismsDiffer>false</organismsDiffer>
    <experiments>3</experiments>
</comment>
<comment type="interaction">
    <interactant intactId="EBI-14835966">
        <id>Q08648-4</id>
    </interactant>
    <interactant intactId="EBI-947187">
        <id>Q9UHD9</id>
        <label>UBQLN2</label>
    </interactant>
    <organismsDiffer>false</organismsDiffer>
    <experiments>3</experiments>
</comment>
<comment type="subcellular location">
    <subcellularLocation>
        <location evidence="9">Secreted</location>
    </subcellularLocation>
</comment>
<comment type="alternative products">
    <event type="alternative splicing"/>
    <isoform>
        <id>Q08648-1</id>
        <name>EP2A</name>
        <name>HE2 alpha1</name>
        <sequence type="displayed"/>
    </isoform>
    <isoform>
        <id>Q08648-2</id>
        <name>EP2B</name>
        <sequence type="described" ref="VSP_006208"/>
    </isoform>
    <isoform>
        <id>Q08648-3</id>
        <name>EP2C</name>
        <name>HE2C</name>
        <sequence type="described" ref="VSP_006209"/>
    </isoform>
    <isoform>
        <id>Q08648-4</id>
        <name>EP2D</name>
        <name>HE2 beta1</name>
        <sequence type="described" ref="VSP_006210"/>
    </isoform>
    <isoform>
        <id>Q08648-5</id>
        <name>EP2E</name>
        <sequence type="described" ref="VSP_044926 VSP_044927"/>
    </isoform>
    <isoform>
        <id>Q08648-6</id>
        <name>EP2F</name>
        <sequence type="not described"/>
    </isoform>
    <text>Exon 6 is read in two different reading frames, one resulting in the N-terminal amino acid sequences of EP2A, EP2B and EP2F and the other in the N-terminal sequences of EP2D, EP2E and EP2G.</text>
</comment>
<comment type="tissue specificity">
    <text evidence="4">Specifically expressed in caput and proximal corpus of epididymis (at protein level) (PubMed:8167223). Present in the epididymal epithelium and on the sperm surface, with a subacrosomal equatorial distribution on the sperm head (at protein level) (PubMed:8167223).</text>
</comment>
<comment type="similarity">
    <text evidence="9">Belongs to the SPAG11 family.</text>
</comment>
<accession>Q08648</accession>
<accession>E9PFH0</accession>
<accession>Q546A0</accession>
<accession>Q6ZYB2</accession>
<accession>Q9H4P8</accession>
<accession>Q9H4P9</accession>
<accession>Q9H4Q0</accession>
<accession>Q9H4Q1</accession>
<accession>Q9H4Q2</accession>
<accession>Q9NRT3</accession>
<accession>Q9NRV4</accession>
<accession>Q9NRV5</accession>
<accession>Q9NRV6</accession>
<accession>Q9NRV7</accession>
<accession>Q9NRV8</accession>
<feature type="signal peptide" evidence="2">
    <location>
        <begin position="1"/>
        <end position="25"/>
    </location>
</feature>
<feature type="chain" id="PRO_0000033185" description="Sperm-associated antigen 11B">
    <location>
        <begin position="26"/>
        <end position="103"/>
    </location>
</feature>
<feature type="glycosylation site" description="N-linked (GlcNAc...) asparagine" evidence="2">
    <location>
        <position position="29"/>
    </location>
</feature>
<feature type="splice variant" id="VSP_044926" description="In isoform EP2E." evidence="9">
    <original>MRQRLLPSVTSLLLVALLFPGSSQARHVNHSATEALGELRERAPGQGTNGFQLLRHAVKRDLLPPRTPPYQVHISHREAR</original>
    <variation>MKVFFLFAVLFCLVQTNSGDVPPGIRNTICHMQQGICRLFFCHSGEKKRDICSDPWNRCCVSNTDEEGKEKPEMDGRSGI</variation>
    <location>
        <begin position="1"/>
        <end position="80"/>
    </location>
</feature>
<feature type="splice variant" id="VSP_006208" description="In isoform EP2B." evidence="9">
    <original>MRQRLLPSVTSLLLVALLFPGSSQARHVNHSATEALGELRERAPGQGTNGFQLLRHAVKRDLLPPRTPPYQ</original>
    <variation>MKVFFLFAVLFCLVQTNS</variation>
    <location>
        <begin position="1"/>
        <end position="71"/>
    </location>
</feature>
<feature type="splice variant" id="VSP_006209" description="In isoform EP2C." evidence="8">
    <original>VHISHREARGPSFRICVDFLGPRWARGCSTGN</original>
    <variation>EPASDLKVVDCRRSEGFCQEYCNYMETQVGYCSKKKDACCLH</variation>
    <location>
        <begin position="72"/>
        <end position="103"/>
    </location>
</feature>
<feature type="splice variant" id="VSP_006210" description="In isoform EP2D." evidence="5">
    <original>VHISHREARGPSFRICVDFLGPRWARGCSTGN</original>
    <variation>GDVPPGIRNTICHMQQGICRLFFCHSGEKKRDICSDPWNRCCVSNTDEEGKEKPEMDGRSGI</variation>
    <location>
        <begin position="72"/>
        <end position="103"/>
    </location>
</feature>
<feature type="splice variant" id="VSP_044927" description="In isoform EP2E." evidence="9">
    <location>
        <begin position="81"/>
        <end position="103"/>
    </location>
</feature>
<feature type="sequence variant" id="VAR_005269" description="In dbSNP:rs2853658." evidence="3">
    <original>R</original>
    <variation>Q</variation>
    <location>
        <position position="77"/>
    </location>
</feature>
<feature type="sequence variant" id="VAR_053683" description="In dbSNP:rs2738035.">
    <original>D</original>
    <variation>G</variation>
    <location>
        <position position="89"/>
    </location>
</feature>
<feature type="sequence conflict" description="In Ref. 4; CAG25732." evidence="9" ref="4">
    <original>L</original>
    <variation>C</variation>
    <location sequence="Q08648-3">
        <position position="18"/>
    </location>
</feature>
<feature type="sequence conflict" description="In Ref. 2; AAF37187." evidence="9" ref="2">
    <original>H</original>
    <variation>R</variation>
    <location sequence="Q08648-4">
        <position position="84"/>
    </location>
</feature>
<feature type="sequence conflict" description="In Ref. 3; AAG21882." evidence="9" ref="3">
    <original>H</original>
    <variation>R</variation>
    <location sequence="Q08648-5">
        <position position="31"/>
    </location>
</feature>
<dbReference type="EMBL" id="X67697">
    <property type="protein sequence ID" value="CAA47927.1"/>
    <property type="molecule type" value="mRNA"/>
</dbReference>
<dbReference type="EMBL" id="AF168616">
    <property type="protein sequence ID" value="AAF37186.1"/>
    <property type="molecule type" value="mRNA"/>
</dbReference>
<dbReference type="EMBL" id="AF168617">
    <property type="protein sequence ID" value="AAF37187.1"/>
    <property type="molecule type" value="mRNA"/>
</dbReference>
<dbReference type="EMBL" id="AY005129">
    <property type="protein sequence ID" value="AAG21878.1"/>
    <property type="molecule type" value="Genomic_DNA"/>
</dbReference>
<dbReference type="EMBL" id="AY005129">
    <property type="protein sequence ID" value="AAG21879.1"/>
    <property type="molecule type" value="Genomic_DNA"/>
</dbReference>
<dbReference type="EMBL" id="AY005129">
    <property type="protein sequence ID" value="AAG21880.1"/>
    <property type="molecule type" value="Genomic_DNA"/>
</dbReference>
<dbReference type="EMBL" id="AY005129">
    <property type="protein sequence ID" value="AAG21881.1"/>
    <property type="molecule type" value="Genomic_DNA"/>
</dbReference>
<dbReference type="EMBL" id="AY005129">
    <property type="protein sequence ID" value="AAG21882.1"/>
    <property type="molecule type" value="Genomic_DNA"/>
</dbReference>
<dbReference type="EMBL" id="AY005129">
    <property type="protein sequence ID" value="AAG21883.1"/>
    <property type="molecule type" value="Genomic_DNA"/>
</dbReference>
<dbReference type="EMBL" id="AJ628017">
    <property type="protein sequence ID" value="CAF31328.1"/>
    <property type="molecule type" value="mRNA"/>
</dbReference>
<dbReference type="EMBL" id="AJ635328">
    <property type="protein sequence ID" value="CAG25732.1"/>
    <property type="molecule type" value="mRNA"/>
</dbReference>
<dbReference type="EMBL" id="AC130360">
    <property type="status" value="NOT_ANNOTATED_CDS"/>
    <property type="molecule type" value="Genomic_DNA"/>
</dbReference>
<dbReference type="CCDS" id="CCDS47774.1">
    <molecule id="Q08648-4"/>
</dbReference>
<dbReference type="CCDS" id="CCDS5966.1">
    <molecule id="Q08648-1"/>
</dbReference>
<dbReference type="CCDS" id="CCDS5967.1">
    <molecule id="Q08648-3"/>
</dbReference>
<dbReference type="PIR" id="I37454">
    <property type="entry name" value="I37454"/>
</dbReference>
<dbReference type="RefSeq" id="NP_057596.1">
    <molecule id="Q08648-1"/>
    <property type="nucleotide sequence ID" value="NM_016512.5"/>
</dbReference>
<dbReference type="RefSeq" id="NP_478107.2">
    <property type="nucleotide sequence ID" value="NM_058200.2"/>
</dbReference>
<dbReference type="RefSeq" id="NP_478108.2">
    <molecule id="Q08648-4"/>
    <property type="nucleotide sequence ID" value="NM_058201.4"/>
</dbReference>
<dbReference type="RefSeq" id="NP_478109.1">
    <property type="nucleotide sequence ID" value="NM_058202.2"/>
</dbReference>
<dbReference type="RefSeq" id="NP_478110.1">
    <molecule id="Q08648-3"/>
    <property type="nucleotide sequence ID" value="NM_058203.4"/>
</dbReference>
<dbReference type="RefSeq" id="NP_478113.2">
    <molecule id="Q08648-2"/>
    <property type="nucleotide sequence ID" value="NM_058206.5"/>
</dbReference>
<dbReference type="RefSeq" id="NP_478114.2">
    <molecule id="Q08648-5"/>
    <property type="nucleotide sequence ID" value="NM_058207.4"/>
</dbReference>
<dbReference type="RefSeq" id="XP_005272449.2">
    <molecule id="Q08648-3"/>
    <property type="nucleotide sequence ID" value="XM_005272392.4"/>
</dbReference>
<dbReference type="BioGRID" id="115678">
    <property type="interactions" value="3"/>
</dbReference>
<dbReference type="FunCoup" id="Q08648">
    <property type="interactions" value="1"/>
</dbReference>
<dbReference type="IntAct" id="Q08648">
    <property type="interactions" value="13"/>
</dbReference>
<dbReference type="TCDB" id="1.C.85.1.5">
    <property type="family name" value="the pore-forming Beta-defensin (Beta-defensin) family"/>
</dbReference>
<dbReference type="GlyCosmos" id="Q08648">
    <property type="glycosylation" value="1 site, No reported glycans"/>
</dbReference>
<dbReference type="GlyGen" id="Q08648">
    <property type="glycosylation" value="1 site"/>
</dbReference>
<dbReference type="BioMuta" id="SPAG11B"/>
<dbReference type="DMDM" id="93141314"/>
<dbReference type="MassIVE" id="Q08648"/>
<dbReference type="PeptideAtlas" id="Q08648"/>
<dbReference type="ProteomicsDB" id="20100"/>
<dbReference type="ProteomicsDB" id="58638">
    <molecule id="Q08648-1"/>
</dbReference>
<dbReference type="ProteomicsDB" id="58639">
    <molecule id="Q08648-2"/>
</dbReference>
<dbReference type="ProteomicsDB" id="58641">
    <molecule id="Q08648-4"/>
</dbReference>
<dbReference type="TopDownProteomics" id="Q08648-2">
    <molecule id="Q08648-2"/>
</dbReference>
<dbReference type="Antibodypedia" id="22021">
    <property type="antibodies" value="45 antibodies from 11 providers"/>
</dbReference>
<dbReference type="DNASU" id="10407"/>
<dbReference type="Ensembl" id="ENST00000297498.6">
    <molecule id="Q08648-1"/>
    <property type="protein sequence ID" value="ENSP00000297498.2"/>
    <property type="gene ID" value="ENSG00000164871.18"/>
</dbReference>
<dbReference type="Ensembl" id="ENST00000317900.7">
    <molecule id="Q08648-3"/>
    <property type="protein sequence ID" value="ENSP00000322591.5"/>
    <property type="gene ID" value="ENSG00000164871.18"/>
</dbReference>
<dbReference type="Ensembl" id="ENST00000398462.7">
    <molecule id="Q08648-4"/>
    <property type="protein sequence ID" value="ENSP00000381480.2"/>
    <property type="gene ID" value="ENSG00000164871.18"/>
</dbReference>
<dbReference type="Ensembl" id="ENST00000458665.5">
    <molecule id="Q08648-5"/>
    <property type="protein sequence ID" value="ENSP00000398550.1"/>
    <property type="gene ID" value="ENSG00000164871.18"/>
</dbReference>
<dbReference type="Ensembl" id="ENST00000528168.3">
    <molecule id="Q08648-2"/>
    <property type="protein sequence ID" value="ENSP00000431230.1"/>
    <property type="gene ID" value="ENSG00000164871.18"/>
</dbReference>
<dbReference type="Ensembl" id="ENST00000619134.4">
    <molecule id="Q08648-5"/>
    <property type="protein sequence ID" value="ENSP00000483205.1"/>
    <property type="gene ID" value="ENSG00000274405.4"/>
</dbReference>
<dbReference type="Ensembl" id="ENST00000622314.3">
    <molecule id="Q08648-2"/>
    <property type="protein sequence ID" value="ENSP00000481630.1"/>
    <property type="gene ID" value="ENSG00000274405.4"/>
</dbReference>
<dbReference type="Ensembl" id="ENST00000710639.1">
    <molecule id="Q08648-3"/>
    <property type="protein sequence ID" value="ENSP00000518394.1"/>
    <property type="gene ID" value="ENSG00000285507.3"/>
</dbReference>
<dbReference type="GeneID" id="10407"/>
<dbReference type="GeneID" id="653423"/>
<dbReference type="KEGG" id="hsa:10407"/>
<dbReference type="MANE-Select" id="ENST00000398462.7">
    <molecule id="Q08648-4"/>
    <property type="protein sequence ID" value="ENSP00000381480.2"/>
    <property type="RefSeq nucleotide sequence ID" value="NM_058201.4"/>
    <property type="RefSeq protein sequence ID" value="NP_478108.2"/>
</dbReference>
<dbReference type="UCSC" id="uc003wri.4">
    <molecule id="Q08648-1"/>
    <property type="organism name" value="human"/>
</dbReference>
<dbReference type="AGR" id="HGNC:14534"/>
<dbReference type="AGR" id="HGNC:33342"/>
<dbReference type="CTD" id="10407"/>
<dbReference type="CTD" id="653423"/>
<dbReference type="DisGeNET" id="10407"/>
<dbReference type="DisGeNET" id="653423"/>
<dbReference type="GeneCards" id="SPAG11B"/>
<dbReference type="HGNC" id="HGNC:14534">
    <property type="gene designation" value="SPAG11B"/>
</dbReference>
<dbReference type="HPA" id="ENSG00000164871">
    <property type="expression patterns" value="Tissue enriched (epididymis)"/>
</dbReference>
<dbReference type="MIM" id="606560">
    <property type="type" value="gene"/>
</dbReference>
<dbReference type="neXtProt" id="NX_Q08648"/>
<dbReference type="OpenTargets" id="ENSG00000178287"/>
<dbReference type="PharmGKB" id="PA37894"/>
<dbReference type="VEuPathDB" id="HostDB:ENSG00000164871"/>
<dbReference type="GeneTree" id="ENSGT00940000161432"/>
<dbReference type="HOGENOM" id="CLU_178650_0_0_1"/>
<dbReference type="InParanoid" id="Q08648"/>
<dbReference type="OMA" id="GYCQEYC"/>
<dbReference type="OrthoDB" id="9828952at2759"/>
<dbReference type="PAN-GO" id="Q08648">
    <property type="GO annotations" value="1 GO annotation based on evolutionary models"/>
</dbReference>
<dbReference type="PhylomeDB" id="Q08648"/>
<dbReference type="PathwayCommons" id="Q08648"/>
<dbReference type="SignaLink" id="Q08648"/>
<dbReference type="BioGRID-ORCS" id="10407">
    <property type="hits" value="15 hits in 1026 CRISPR screens"/>
</dbReference>
<dbReference type="ChiTaRS" id="SPAG11B">
    <property type="organism name" value="human"/>
</dbReference>
<dbReference type="GeneWiki" id="SPAG11B"/>
<dbReference type="GenomeRNAi" id="10407"/>
<dbReference type="Pharos" id="Q08648">
    <property type="development level" value="Tbio"/>
</dbReference>
<dbReference type="PRO" id="PR:Q08648"/>
<dbReference type="Proteomes" id="UP000005640">
    <property type="component" value="Chromosome 8"/>
</dbReference>
<dbReference type="RNAct" id="Q08648">
    <property type="molecule type" value="protein"/>
</dbReference>
<dbReference type="Bgee" id="ENSG00000164871">
    <property type="expression patterns" value="Expressed in male germ line stem cell (sensu Vertebrata) in testis and 33 other cell types or tissues"/>
</dbReference>
<dbReference type="ExpressionAtlas" id="Q08648">
    <property type="expression patterns" value="baseline and differential"/>
</dbReference>
<dbReference type="GO" id="GO:0005576">
    <property type="term" value="C:extracellular region"/>
    <property type="evidence" value="ECO:0000303"/>
    <property type="project" value="UniProtKB"/>
</dbReference>
<dbReference type="GO" id="GO:0061844">
    <property type="term" value="P:antimicrobial humoral immune response mediated by antimicrobial peptide"/>
    <property type="evidence" value="ECO:0000315"/>
    <property type="project" value="UniProtKB"/>
</dbReference>
<dbReference type="GO" id="GO:0051838">
    <property type="term" value="P:cytolysis by host of symbiont cells"/>
    <property type="evidence" value="ECO:0000315"/>
    <property type="project" value="UniProtKB"/>
</dbReference>
<dbReference type="GO" id="GO:0042742">
    <property type="term" value="P:defense response to bacterium"/>
    <property type="evidence" value="ECO:0007669"/>
    <property type="project" value="UniProtKB-KW"/>
</dbReference>
<dbReference type="GO" id="GO:0007283">
    <property type="term" value="P:spermatogenesis"/>
    <property type="evidence" value="ECO:0000304"/>
    <property type="project" value="ProtInc"/>
</dbReference>
<dbReference type="InterPro" id="IPR007988">
    <property type="entry name" value="Sperm_Ag_11A_B"/>
</dbReference>
<dbReference type="PANTHER" id="PTHR14081:SF1">
    <property type="entry name" value="SPERM-ASSOCIATED ANTIGEN 11A-RELATED"/>
    <property type="match status" value="1"/>
</dbReference>
<dbReference type="PANTHER" id="PTHR14081">
    <property type="entry name" value="SPERM-ASSOCIATED ANTIGEN 11A-RELATED-RELATED"/>
    <property type="match status" value="1"/>
</dbReference>
<dbReference type="Pfam" id="PF05324">
    <property type="entry name" value="Sperm_Ag_HE2"/>
    <property type="match status" value="1"/>
</dbReference>